<reference key="1">
    <citation type="journal article" date="2003" name="Proc. Natl. Acad. Sci. U.S.A.">
        <title>The complete genome sequence of Mycobacterium bovis.</title>
        <authorList>
            <person name="Garnier T."/>
            <person name="Eiglmeier K."/>
            <person name="Camus J.-C."/>
            <person name="Medina N."/>
            <person name="Mansoor H."/>
            <person name="Pryor M."/>
            <person name="Duthoy S."/>
            <person name="Grondin S."/>
            <person name="Lacroix C."/>
            <person name="Monsempe C."/>
            <person name="Simon S."/>
            <person name="Harris B."/>
            <person name="Atkin R."/>
            <person name="Doggett J."/>
            <person name="Mayes R."/>
            <person name="Keating L."/>
            <person name="Wheeler P.R."/>
            <person name="Parkhill J."/>
            <person name="Barrell B.G."/>
            <person name="Cole S.T."/>
            <person name="Gordon S.V."/>
            <person name="Hewinson R.G."/>
        </authorList>
    </citation>
    <scope>NUCLEOTIDE SEQUENCE [LARGE SCALE GENOMIC DNA]</scope>
    <source>
        <strain>ATCC BAA-935 / AF2122/97</strain>
    </source>
</reference>
<reference key="2">
    <citation type="journal article" date="2017" name="Genome Announc.">
        <title>Updated reference genome sequence and annotation of Mycobacterium bovis AF2122/97.</title>
        <authorList>
            <person name="Malone K.M."/>
            <person name="Farrell D."/>
            <person name="Stuber T.P."/>
            <person name="Schubert O.T."/>
            <person name="Aebersold R."/>
            <person name="Robbe-Austerman S."/>
            <person name="Gordon S.V."/>
        </authorList>
    </citation>
    <scope>NUCLEOTIDE SEQUENCE [LARGE SCALE GENOMIC DNA]</scope>
    <scope>GENOME REANNOTATION</scope>
    <source>
        <strain>ATCC BAA-935 / AF2122/97</strain>
    </source>
</reference>
<keyword id="KW-0068">Autocatalytic cleavage</keyword>
<keyword id="KW-0963">Cytoplasm</keyword>
<keyword id="KW-0378">Hydrolase</keyword>
<keyword id="KW-0645">Protease</keyword>
<keyword id="KW-0647">Proteasome</keyword>
<keyword id="KW-1185">Reference proteome</keyword>
<keyword id="KW-0888">Threonine protease</keyword>
<keyword id="KW-0865">Zymogen</keyword>
<feature type="propeptide" id="PRO_0000397524" description="Removed in mature form; by autocatalysis" evidence="1">
    <location>
        <begin position="1"/>
        <end position="57"/>
    </location>
</feature>
<feature type="chain" id="PRO_0000397525" description="Proteasome subunit beta">
    <location>
        <begin position="58"/>
        <end position="291"/>
    </location>
</feature>
<feature type="active site" description="Nucleophile" evidence="1">
    <location>
        <position position="58"/>
    </location>
</feature>
<organism>
    <name type="scientific">Mycobacterium bovis (strain ATCC BAA-935 / AF2122/97)</name>
    <dbReference type="NCBI Taxonomy" id="233413"/>
    <lineage>
        <taxon>Bacteria</taxon>
        <taxon>Bacillati</taxon>
        <taxon>Actinomycetota</taxon>
        <taxon>Actinomycetes</taxon>
        <taxon>Mycobacteriales</taxon>
        <taxon>Mycobacteriaceae</taxon>
        <taxon>Mycobacterium</taxon>
        <taxon>Mycobacterium tuberculosis complex</taxon>
    </lineage>
</organism>
<proteinExistence type="inferred from homology"/>
<accession>Q7TZ13</accession>
<accession>A0A1R3Y083</accession>
<accession>X2BJF5</accession>
<protein>
    <recommendedName>
        <fullName evidence="1">Proteasome subunit beta</fullName>
        <ecNumber evidence="1">3.4.25.1</ecNumber>
    </recommendedName>
    <alternativeName>
        <fullName evidence="1">20S proteasome beta subunit</fullName>
    </alternativeName>
    <alternativeName>
        <fullName evidence="1">Proteasome core protein PrcB</fullName>
    </alternativeName>
</protein>
<sequence length="291" mass="30305">MTWPLPDRLSINSLSGTPAVDLSSFTDFLRRQAPELLPASISGGAPLAGGDAQLPHGTTIVALKYPGGVVMAGDRRSTQGNMISGRDVRKVYITDDYTATGIAGTAAVAVEFARLYAVELEHYEKLEGVPLTFAGKINRLAIMVRGNLAAAMQGLLALPLLAGYDIHASDPQSAGRIVSFDAAGGWNIEEEGYQAVGSGSLFAKSSMKKLYSQVTDGDSGLRVAVEALYDAADDDSATGGPDLVRGIFPTAVIIDADGAVDVPESRIAELARAIIESRSGADTFGSDGGEK</sequence>
<evidence type="ECO:0000255" key="1">
    <source>
        <dbReference type="HAMAP-Rule" id="MF_02113"/>
    </source>
</evidence>
<name>PSB_MYCBO</name>
<comment type="function">
    <text evidence="1">Component of the proteasome core, a large protease complex with broad specificity involved in protein degradation.</text>
</comment>
<comment type="catalytic activity">
    <reaction evidence="1">
        <text>Cleavage of peptide bonds with very broad specificity.</text>
        <dbReference type="EC" id="3.4.25.1"/>
    </reaction>
</comment>
<comment type="activity regulation">
    <text evidence="1">The formation of the proteasomal ATPase ARC-20S proteasome complex, likely via the docking of the C-termini of ARC into the intersubunit pockets in the alpha-rings, may trigger opening of the gate for substrate entry. Interconversion between the open-gate and close-gate conformations leads to a dynamic regulation of the 20S proteasome proteolysis activity.</text>
</comment>
<comment type="pathway">
    <text evidence="1">Protein degradation; proteasomal Pup-dependent pathway.</text>
</comment>
<comment type="subunit">
    <text evidence="1">The 20S proteasome core is composed of 14 alpha and 14 beta subunits that assemble into four stacked heptameric rings, resulting in a barrel-shaped structure. The two inner rings, each composed of seven catalytic beta subunits, are sandwiched by two outer rings, each composed of seven alpha subunits. The catalytic chamber with the active sites is on the inside of the barrel. Has a gated structure, the ends of the cylinder being occluded by the N-termini of the alpha-subunits. Is capped by the proteasome-associated ATPase, ARC.</text>
</comment>
<comment type="subcellular location">
    <subcellularLocation>
        <location evidence="1">Cytoplasm</location>
    </subcellularLocation>
</comment>
<comment type="similarity">
    <text evidence="1">Belongs to the peptidase T1B family.</text>
</comment>
<gene>
    <name evidence="1" type="primary">prcB</name>
    <name type="ordered locus">BQ2027_MB2134C</name>
</gene>
<dbReference type="EC" id="3.4.25.1" evidence="1"/>
<dbReference type="EMBL" id="LT708304">
    <property type="protein sequence ID" value="SIU00741.1"/>
    <property type="molecule type" value="Genomic_DNA"/>
</dbReference>
<dbReference type="RefSeq" id="NP_855783.1">
    <property type="nucleotide sequence ID" value="NC_002945.3"/>
</dbReference>
<dbReference type="RefSeq" id="WP_003411023.1">
    <property type="nucleotide sequence ID" value="NC_002945.4"/>
</dbReference>
<dbReference type="SMR" id="Q7TZ13"/>
<dbReference type="MEROPS" id="T01.005"/>
<dbReference type="KEGG" id="mbo:BQ2027_MB2134C"/>
<dbReference type="PATRIC" id="fig|233413.5.peg.2347"/>
<dbReference type="UniPathway" id="UPA00997"/>
<dbReference type="Proteomes" id="UP000001419">
    <property type="component" value="Chromosome"/>
</dbReference>
<dbReference type="GO" id="GO:0005737">
    <property type="term" value="C:cytoplasm"/>
    <property type="evidence" value="ECO:0007669"/>
    <property type="project" value="UniProtKB-SubCell"/>
</dbReference>
<dbReference type="GO" id="GO:0019774">
    <property type="term" value="C:proteasome core complex, beta-subunit complex"/>
    <property type="evidence" value="ECO:0007669"/>
    <property type="project" value="UniProtKB-UniRule"/>
</dbReference>
<dbReference type="GO" id="GO:0004298">
    <property type="term" value="F:threonine-type endopeptidase activity"/>
    <property type="evidence" value="ECO:0007669"/>
    <property type="project" value="UniProtKB-UniRule"/>
</dbReference>
<dbReference type="GO" id="GO:0019941">
    <property type="term" value="P:modification-dependent protein catabolic process"/>
    <property type="evidence" value="ECO:0007669"/>
    <property type="project" value="UniProtKB-UniRule"/>
</dbReference>
<dbReference type="GO" id="GO:0010498">
    <property type="term" value="P:proteasomal protein catabolic process"/>
    <property type="evidence" value="ECO:0007669"/>
    <property type="project" value="UniProtKB-UniRule"/>
</dbReference>
<dbReference type="CDD" id="cd01906">
    <property type="entry name" value="proteasome_protease_HslV"/>
    <property type="match status" value="1"/>
</dbReference>
<dbReference type="FunFam" id="3.60.20.10:FF:000046">
    <property type="entry name" value="Proteasome subunit beta"/>
    <property type="match status" value="1"/>
</dbReference>
<dbReference type="Gene3D" id="3.60.20.10">
    <property type="entry name" value="Glutamine Phosphoribosylpyrophosphate, subunit 1, domain 1"/>
    <property type="match status" value="1"/>
</dbReference>
<dbReference type="HAMAP" id="MF_02113_B">
    <property type="entry name" value="Proteasome_B_B"/>
    <property type="match status" value="1"/>
</dbReference>
<dbReference type="InterPro" id="IPR029055">
    <property type="entry name" value="Ntn_hydrolases_N"/>
</dbReference>
<dbReference type="InterPro" id="IPR001353">
    <property type="entry name" value="Proteasome_sua/b"/>
</dbReference>
<dbReference type="InterPro" id="IPR023333">
    <property type="entry name" value="Proteasome_suB-type"/>
</dbReference>
<dbReference type="InterPro" id="IPR022483">
    <property type="entry name" value="PSB_actinobac"/>
</dbReference>
<dbReference type="NCBIfam" id="TIGR03690">
    <property type="entry name" value="20S_bact_beta"/>
    <property type="match status" value="1"/>
</dbReference>
<dbReference type="PANTHER" id="PTHR32194:SF0">
    <property type="entry name" value="ATP-DEPENDENT PROTEASE SUBUNIT HSLV"/>
    <property type="match status" value="1"/>
</dbReference>
<dbReference type="PANTHER" id="PTHR32194">
    <property type="entry name" value="METALLOPROTEASE TLDD"/>
    <property type="match status" value="1"/>
</dbReference>
<dbReference type="Pfam" id="PF00227">
    <property type="entry name" value="Proteasome"/>
    <property type="match status" value="1"/>
</dbReference>
<dbReference type="SUPFAM" id="SSF56235">
    <property type="entry name" value="N-terminal nucleophile aminohydrolases (Ntn hydrolases)"/>
    <property type="match status" value="1"/>
</dbReference>
<dbReference type="PROSITE" id="PS51476">
    <property type="entry name" value="PROTEASOME_BETA_2"/>
    <property type="match status" value="1"/>
</dbReference>